<proteinExistence type="evidence at transcript level"/>
<organism>
    <name type="scientific">Oryza sativa subsp. indica</name>
    <name type="common">Rice</name>
    <dbReference type="NCBI Taxonomy" id="39946"/>
    <lineage>
        <taxon>Eukaryota</taxon>
        <taxon>Viridiplantae</taxon>
        <taxon>Streptophyta</taxon>
        <taxon>Embryophyta</taxon>
        <taxon>Tracheophyta</taxon>
        <taxon>Spermatophyta</taxon>
        <taxon>Magnoliopsida</taxon>
        <taxon>Liliopsida</taxon>
        <taxon>Poales</taxon>
        <taxon>Poaceae</taxon>
        <taxon>BOP clade</taxon>
        <taxon>Oryzoideae</taxon>
        <taxon>Oryzeae</taxon>
        <taxon>Oryzinae</taxon>
        <taxon>Oryza</taxon>
        <taxon>Oryza sativa</taxon>
    </lineage>
</organism>
<name>HOX12_ORYSI</name>
<comment type="function">
    <text evidence="1">Probable transcription factor.</text>
</comment>
<comment type="subcellular location">
    <subcellularLocation>
        <location evidence="6">Nucleus</location>
    </subcellularLocation>
</comment>
<comment type="tissue specificity">
    <text evidence="5">Expressed in seedlings, roots, stems, leaf sheaths and panicles.</text>
</comment>
<comment type="similarity">
    <text evidence="6">Belongs to the HD-ZIP homeobox family. Class I subfamily.</text>
</comment>
<comment type="sequence caution" evidence="6">
    <conflict type="miscellaneous discrepancy">
        <sequence resource="EMBL-CDS" id="AAS83422"/>
    </conflict>
    <text>Intron retention.</text>
</comment>
<sequence length="239" mass="26123">MSREEEEKLLFPSFAFPAECFPEAATSGGEQKKARQRRRRKVKPEAAAALAGESGGDEQAKKRRLSDEQARFLEMSFKKERKLETPRKVQLAAELGLDAKQVAVWFQNRRARHKSKLMEEEFAKLRSAHDAVVLQNCHLETELLKLKERLADVEEEKAKLAAVAAATTGGGGGGGGGSSSPTSSSFSTVTYHPVLAGQFGVEAAAEEADLTYMSEYAYNSYMLELAAAGYCGGVYDQFS</sequence>
<protein>
    <recommendedName>
        <fullName>Homeobox-leucine zipper protein HOX12</fullName>
    </recommendedName>
    <alternativeName>
        <fullName>HD-ZIP protein HOX12</fullName>
    </alternativeName>
    <alternativeName>
        <fullName>Homeodomain transcription factor HOX12</fullName>
    </alternativeName>
    <alternativeName>
        <fullName>OsHox12</fullName>
    </alternativeName>
</protein>
<evidence type="ECO:0000250" key="1"/>
<evidence type="ECO:0000255" key="2"/>
<evidence type="ECO:0000255" key="3">
    <source>
        <dbReference type="PROSITE-ProRule" id="PRU00108"/>
    </source>
</evidence>
<evidence type="ECO:0000256" key="4">
    <source>
        <dbReference type="SAM" id="MobiDB-lite"/>
    </source>
</evidence>
<evidence type="ECO:0000269" key="5">
    <source>
    </source>
</evidence>
<evidence type="ECO:0000305" key="6"/>
<dbReference type="EMBL" id="CM000128">
    <property type="protein sequence ID" value="EAY88915.1"/>
    <property type="molecule type" value="Genomic_DNA"/>
</dbReference>
<dbReference type="EMBL" id="AY554034">
    <property type="protein sequence ID" value="AAS83422.1"/>
    <property type="status" value="ALT_SEQ"/>
    <property type="molecule type" value="mRNA"/>
</dbReference>
<dbReference type="EMBL" id="EF555533">
    <property type="protein sequence ID" value="ABQ57274.1"/>
    <property type="molecule type" value="mRNA"/>
</dbReference>
<dbReference type="SMR" id="A2XDK5"/>
<dbReference type="EnsemblPlants" id="BGIOSGA011276-TA">
    <property type="protein sequence ID" value="BGIOSGA011276-PA"/>
    <property type="gene ID" value="BGIOSGA011276"/>
</dbReference>
<dbReference type="EnsemblPlants" id="OsGoSa_03g0007150.01">
    <property type="protein sequence ID" value="OsGoSa_03g0007150.01"/>
    <property type="gene ID" value="OsGoSa_03g0007150"/>
</dbReference>
<dbReference type="EnsemblPlants" id="OsIR64_03g0007070.01">
    <property type="protein sequence ID" value="OsIR64_03g0007070.01"/>
    <property type="gene ID" value="OsIR64_03g0007070"/>
</dbReference>
<dbReference type="EnsemblPlants" id="OsKYG_03g0007170.01">
    <property type="protein sequence ID" value="OsKYG_03g0007170.01"/>
    <property type="gene ID" value="OsKYG_03g0007170"/>
</dbReference>
<dbReference type="EnsemblPlants" id="OsLaMu_03g0007140.01">
    <property type="protein sequence ID" value="OsLaMu_03g0007140.01"/>
    <property type="gene ID" value="OsLaMu_03g0007140"/>
</dbReference>
<dbReference type="EnsemblPlants" id="OsLima_03g0007110.01">
    <property type="protein sequence ID" value="OsLima_03g0007110.01"/>
    <property type="gene ID" value="OsLima_03g0007110"/>
</dbReference>
<dbReference type="EnsemblPlants" id="OsLiXu_03g0007170.01">
    <property type="protein sequence ID" value="OsLiXu_03g0007170.01"/>
    <property type="gene ID" value="OsLiXu_03g0007170"/>
</dbReference>
<dbReference type="EnsemblPlants" id="OsMH63_03G007090_01">
    <property type="protein sequence ID" value="OsMH63_03G007090_01"/>
    <property type="gene ID" value="OsMH63_03G007090"/>
</dbReference>
<dbReference type="EnsemblPlants" id="OsPr106_03g0007150.01">
    <property type="protein sequence ID" value="OsPr106_03g0007150.01"/>
    <property type="gene ID" value="OsPr106_03g0007150"/>
</dbReference>
<dbReference type="EnsemblPlants" id="OsZS97_03G006980_01">
    <property type="protein sequence ID" value="OsZS97_03G006980_01"/>
    <property type="gene ID" value="OsZS97_03G006980"/>
</dbReference>
<dbReference type="Gramene" id="BGIOSGA011276-TA">
    <property type="protein sequence ID" value="BGIOSGA011276-PA"/>
    <property type="gene ID" value="BGIOSGA011276"/>
</dbReference>
<dbReference type="Gramene" id="OsGoSa_03g0007150.01">
    <property type="protein sequence ID" value="OsGoSa_03g0007150.01"/>
    <property type="gene ID" value="OsGoSa_03g0007150"/>
</dbReference>
<dbReference type="Gramene" id="OsIR64_03g0007070.01">
    <property type="protein sequence ID" value="OsIR64_03g0007070.01"/>
    <property type="gene ID" value="OsIR64_03g0007070"/>
</dbReference>
<dbReference type="Gramene" id="OsKYG_03g0007170.01">
    <property type="protein sequence ID" value="OsKYG_03g0007170.01"/>
    <property type="gene ID" value="OsKYG_03g0007170"/>
</dbReference>
<dbReference type="Gramene" id="OsLaMu_03g0007140.01">
    <property type="protein sequence ID" value="OsLaMu_03g0007140.01"/>
    <property type="gene ID" value="OsLaMu_03g0007140"/>
</dbReference>
<dbReference type="Gramene" id="OsLima_03g0007110.01">
    <property type="protein sequence ID" value="OsLima_03g0007110.01"/>
    <property type="gene ID" value="OsLima_03g0007110"/>
</dbReference>
<dbReference type="Gramene" id="OsLiXu_03g0007170.01">
    <property type="protein sequence ID" value="OsLiXu_03g0007170.01"/>
    <property type="gene ID" value="OsLiXu_03g0007170"/>
</dbReference>
<dbReference type="Gramene" id="OsMH63_03G007090_01">
    <property type="protein sequence ID" value="OsMH63_03G007090_01"/>
    <property type="gene ID" value="OsMH63_03G007090"/>
</dbReference>
<dbReference type="Gramene" id="OsPr106_03g0007150.01">
    <property type="protein sequence ID" value="OsPr106_03g0007150.01"/>
    <property type="gene ID" value="OsPr106_03g0007150"/>
</dbReference>
<dbReference type="Gramene" id="OsZS97_03G006980_01">
    <property type="protein sequence ID" value="OsZS97_03G006980_01"/>
    <property type="gene ID" value="OsZS97_03G006980"/>
</dbReference>
<dbReference type="HOGENOM" id="CLU_100008_0_0_1"/>
<dbReference type="OMA" id="CKRMEVE"/>
<dbReference type="OrthoDB" id="6159439at2759"/>
<dbReference type="Proteomes" id="UP000007015">
    <property type="component" value="Chromosome 3"/>
</dbReference>
<dbReference type="GO" id="GO:0005634">
    <property type="term" value="C:nucleus"/>
    <property type="evidence" value="ECO:0007669"/>
    <property type="project" value="UniProtKB-SubCell"/>
</dbReference>
<dbReference type="GO" id="GO:0000981">
    <property type="term" value="F:DNA-binding transcription factor activity, RNA polymerase II-specific"/>
    <property type="evidence" value="ECO:0007669"/>
    <property type="project" value="InterPro"/>
</dbReference>
<dbReference type="GO" id="GO:0043565">
    <property type="term" value="F:sequence-specific DNA binding"/>
    <property type="evidence" value="ECO:0007669"/>
    <property type="project" value="TreeGrafter"/>
</dbReference>
<dbReference type="GO" id="GO:0045893">
    <property type="term" value="P:positive regulation of DNA-templated transcription"/>
    <property type="evidence" value="ECO:0007669"/>
    <property type="project" value="TreeGrafter"/>
</dbReference>
<dbReference type="CDD" id="cd00086">
    <property type="entry name" value="homeodomain"/>
    <property type="match status" value="1"/>
</dbReference>
<dbReference type="FunFam" id="1.10.10.60:FF:000241">
    <property type="entry name" value="homeobox-leucine zipper protein ATHB-40"/>
    <property type="match status" value="1"/>
</dbReference>
<dbReference type="Gene3D" id="1.10.10.60">
    <property type="entry name" value="Homeodomain-like"/>
    <property type="match status" value="1"/>
</dbReference>
<dbReference type="InterPro" id="IPR001356">
    <property type="entry name" value="HD"/>
</dbReference>
<dbReference type="InterPro" id="IPR045224">
    <property type="entry name" value="HDZip_class_I_plant"/>
</dbReference>
<dbReference type="InterPro" id="IPR017970">
    <property type="entry name" value="Homeobox_CS"/>
</dbReference>
<dbReference type="InterPro" id="IPR009057">
    <property type="entry name" value="Homeodomain-like_sf"/>
</dbReference>
<dbReference type="InterPro" id="IPR000047">
    <property type="entry name" value="HTH_motif"/>
</dbReference>
<dbReference type="PANTHER" id="PTHR24326">
    <property type="entry name" value="HOMEOBOX-LEUCINE ZIPPER PROTEIN"/>
    <property type="match status" value="1"/>
</dbReference>
<dbReference type="PANTHER" id="PTHR24326:SF545">
    <property type="entry name" value="HOMEOBOX-LEUCINE ZIPPER PROTEIN HOX12"/>
    <property type="match status" value="1"/>
</dbReference>
<dbReference type="Pfam" id="PF00046">
    <property type="entry name" value="Homeodomain"/>
    <property type="match status" value="1"/>
</dbReference>
<dbReference type="PRINTS" id="PR00031">
    <property type="entry name" value="HTHREPRESSR"/>
</dbReference>
<dbReference type="SMART" id="SM00389">
    <property type="entry name" value="HOX"/>
    <property type="match status" value="1"/>
</dbReference>
<dbReference type="SUPFAM" id="SSF46689">
    <property type="entry name" value="Homeodomain-like"/>
    <property type="match status" value="1"/>
</dbReference>
<dbReference type="PROSITE" id="PS00027">
    <property type="entry name" value="HOMEOBOX_1"/>
    <property type="match status" value="1"/>
</dbReference>
<dbReference type="PROSITE" id="PS50071">
    <property type="entry name" value="HOMEOBOX_2"/>
    <property type="match status" value="1"/>
</dbReference>
<accession>A2XDK5</accession>
<accession>A5JPU8</accession>
<accession>Q6Q7D8</accession>
<feature type="chain" id="PRO_0000331696" description="Homeobox-leucine zipper protein HOX12">
    <location>
        <begin position="1"/>
        <end position="239"/>
    </location>
</feature>
<feature type="DNA-binding region" description="Homeobox" evidence="3">
    <location>
        <begin position="58"/>
        <end position="117"/>
    </location>
</feature>
<feature type="region of interest" description="Disordered" evidence="4">
    <location>
        <begin position="22"/>
        <end position="65"/>
    </location>
</feature>
<feature type="coiled-coil region" evidence="2">
    <location>
        <begin position="107"/>
        <end position="168"/>
    </location>
</feature>
<keyword id="KW-0175">Coiled coil</keyword>
<keyword id="KW-0238">DNA-binding</keyword>
<keyword id="KW-0371">Homeobox</keyword>
<keyword id="KW-0539">Nucleus</keyword>
<keyword id="KW-1185">Reference proteome</keyword>
<keyword id="KW-0804">Transcription</keyword>
<keyword id="KW-0805">Transcription regulation</keyword>
<reference key="1">
    <citation type="journal article" date="2005" name="PLoS Biol.">
        <title>The genomes of Oryza sativa: a history of duplications.</title>
        <authorList>
            <person name="Yu J."/>
            <person name="Wang J."/>
            <person name="Lin W."/>
            <person name="Li S."/>
            <person name="Li H."/>
            <person name="Zhou J."/>
            <person name="Ni P."/>
            <person name="Dong W."/>
            <person name="Hu S."/>
            <person name="Zeng C."/>
            <person name="Zhang J."/>
            <person name="Zhang Y."/>
            <person name="Li R."/>
            <person name="Xu Z."/>
            <person name="Li S."/>
            <person name="Li X."/>
            <person name="Zheng H."/>
            <person name="Cong L."/>
            <person name="Lin L."/>
            <person name="Yin J."/>
            <person name="Geng J."/>
            <person name="Li G."/>
            <person name="Shi J."/>
            <person name="Liu J."/>
            <person name="Lv H."/>
            <person name="Li J."/>
            <person name="Wang J."/>
            <person name="Deng Y."/>
            <person name="Ran L."/>
            <person name="Shi X."/>
            <person name="Wang X."/>
            <person name="Wu Q."/>
            <person name="Li C."/>
            <person name="Ren X."/>
            <person name="Wang J."/>
            <person name="Wang X."/>
            <person name="Li D."/>
            <person name="Liu D."/>
            <person name="Zhang X."/>
            <person name="Ji Z."/>
            <person name="Zhao W."/>
            <person name="Sun Y."/>
            <person name="Zhang Z."/>
            <person name="Bao J."/>
            <person name="Han Y."/>
            <person name="Dong L."/>
            <person name="Ji J."/>
            <person name="Chen P."/>
            <person name="Wu S."/>
            <person name="Liu J."/>
            <person name="Xiao Y."/>
            <person name="Bu D."/>
            <person name="Tan J."/>
            <person name="Yang L."/>
            <person name="Ye C."/>
            <person name="Zhang J."/>
            <person name="Xu J."/>
            <person name="Zhou Y."/>
            <person name="Yu Y."/>
            <person name="Zhang B."/>
            <person name="Zhuang S."/>
            <person name="Wei H."/>
            <person name="Liu B."/>
            <person name="Lei M."/>
            <person name="Yu H."/>
            <person name="Li Y."/>
            <person name="Xu H."/>
            <person name="Wei S."/>
            <person name="He X."/>
            <person name="Fang L."/>
            <person name="Zhang Z."/>
            <person name="Zhang Y."/>
            <person name="Huang X."/>
            <person name="Su Z."/>
            <person name="Tong W."/>
            <person name="Li J."/>
            <person name="Tong Z."/>
            <person name="Li S."/>
            <person name="Ye J."/>
            <person name="Wang L."/>
            <person name="Fang L."/>
            <person name="Lei T."/>
            <person name="Chen C.-S."/>
            <person name="Chen H.-C."/>
            <person name="Xu Z."/>
            <person name="Li H."/>
            <person name="Huang H."/>
            <person name="Zhang F."/>
            <person name="Xu H."/>
            <person name="Li N."/>
            <person name="Zhao C."/>
            <person name="Li S."/>
            <person name="Dong L."/>
            <person name="Huang Y."/>
            <person name="Li L."/>
            <person name="Xi Y."/>
            <person name="Qi Q."/>
            <person name="Li W."/>
            <person name="Zhang B."/>
            <person name="Hu W."/>
            <person name="Zhang Y."/>
            <person name="Tian X."/>
            <person name="Jiao Y."/>
            <person name="Liang X."/>
            <person name="Jin J."/>
            <person name="Gao L."/>
            <person name="Zheng W."/>
            <person name="Hao B."/>
            <person name="Liu S.-M."/>
            <person name="Wang W."/>
            <person name="Yuan L."/>
            <person name="Cao M."/>
            <person name="McDermott J."/>
            <person name="Samudrala R."/>
            <person name="Wang J."/>
            <person name="Wong G.K.-S."/>
            <person name="Yang H."/>
        </authorList>
    </citation>
    <scope>NUCLEOTIDE SEQUENCE [LARGE SCALE GENOMIC DNA]</scope>
    <source>
        <strain>cv. 93-11</strain>
    </source>
</reference>
<reference key="2">
    <citation type="journal article" date="2008" name="Plant Mol. Biol.">
        <title>A genome-wide survey of HD-Zip genes in rice and analysis of drought-responsive family members.</title>
        <authorList>
            <person name="Agalou A."/>
            <person name="Purwantomo S."/>
            <person name="Oevernaes E."/>
            <person name="Johannesson H."/>
            <person name="Zhu X."/>
            <person name="Estiati A."/>
            <person name="de Kam R.J."/>
            <person name="Engstroem P."/>
            <person name="Slamet-Loedin I.H."/>
            <person name="Zhu Z."/>
            <person name="Wang M."/>
            <person name="Xiong L."/>
            <person name="Meijer A.H."/>
            <person name="Ouwerkerk P.B.F."/>
        </authorList>
    </citation>
    <scope>NUCLEOTIDE SEQUENCE [MRNA] OF 28-239 AND 67-203</scope>
    <scope>TISSUE SPECIFICITY</scope>
    <scope>GENE FAMILY</scope>
    <scope>NOMENCLATURE</scope>
    <source>
        <strain>cv. Minghui 86</strain>
        <strain>cv. Pokkali</strain>
    </source>
</reference>
<gene>
    <name type="primary">HOX12</name>
    <name type="ORF">OsI_010148</name>
</gene>